<evidence type="ECO:0000250" key="1">
    <source>
        <dbReference type="UniProtKB" id="P10069"/>
    </source>
</evidence>
<evidence type="ECO:0000250" key="2">
    <source>
        <dbReference type="UniProtKB" id="P22022"/>
    </source>
</evidence>
<evidence type="ECO:0000255" key="3">
    <source>
        <dbReference type="PROSITE-ProRule" id="PRU00042"/>
    </source>
</evidence>
<evidence type="ECO:0000256" key="4">
    <source>
        <dbReference type="SAM" id="MobiDB-lite"/>
    </source>
</evidence>
<evidence type="ECO:0000269" key="5">
    <source>
    </source>
</evidence>
<evidence type="ECO:0000303" key="6">
    <source ref="1"/>
</evidence>
<evidence type="ECO:0000305" key="7"/>
<evidence type="ECO:0000312" key="8">
    <source>
        <dbReference type="EMBL" id="KJK62960.1"/>
    </source>
</evidence>
<reference key="1">
    <citation type="submission" date="2002-07" db="EMBL/GenBank/DDBJ databases">
        <title>Characterization of Aspergillus parasiticus brlA gene.</title>
        <authorList>
            <person name="Chang P.-K."/>
        </authorList>
    </citation>
    <scope>NUCLEOTIDE SEQUENCE [GENOMIC DNA]</scope>
    <source>
        <strain>ATCC 56775 / NRRL 5862 / SRRC 143 / SU-1</strain>
    </source>
</reference>
<reference key="2">
    <citation type="submission" date="2015-02" db="EMBL/GenBank/DDBJ databases">
        <title>Draft genome sequence of Aspergillus parasiticus SU-1.</title>
        <authorList>
            <person name="Yu J."/>
            <person name="Fedorova N."/>
            <person name="Yin Y."/>
            <person name="Losada L."/>
            <person name="Zafar N."/>
            <person name="Taujale R."/>
            <person name="Ehrlich K.C."/>
            <person name="Bhatnagar D."/>
            <person name="Cleveland T.E."/>
            <person name="Bennett J.W."/>
            <person name="Nierman W.C."/>
        </authorList>
    </citation>
    <scope>NUCLEOTIDE SEQUENCE [LARGE SCALE GENOMIC DNA]</scope>
    <source>
        <strain>ATCC 56775 / NRRL 5862 / SRRC 143 / SU-1</strain>
    </source>
</reference>
<reference key="3">
    <citation type="journal article" date="2007" name="Microbiology">
        <title>Dioctatin A is a strong inhibitor of aflatoxin production by Aspergillus parasiticus.</title>
        <authorList>
            <person name="Yoshinari T."/>
            <person name="Akiyama T."/>
            <person name="Nakamura K."/>
            <person name="Kondo T."/>
            <person name="Takahashi Y."/>
            <person name="Muraoka Y."/>
            <person name="Nonomura Y."/>
            <person name="Nagasawa H."/>
            <person name="Sakuda S."/>
        </authorList>
    </citation>
    <scope>INDUCTION</scope>
</reference>
<protein>
    <recommendedName>
        <fullName evidence="7">C2H2 type master regulator of conidiophore development brlA</fullName>
    </recommendedName>
</protein>
<comment type="function">
    <text evidence="2">BrlA, abaA and wetA are pivotal regulators of conidiophore development and conidium maturation (By similarity). They act individually and together to regulate their own expression and that of numerous other sporulation-specific genes (By similarity). Binds promoters of target genes at brlA response elements (BREs) containing the conserved sequence 5'-(C/A)(A/G)AGGG(G/A)-3' (By similarity).</text>
</comment>
<comment type="subcellular location">
    <subcellularLocation>
        <location evidence="1">Nucleus</location>
    </subcellularLocation>
</comment>
<comment type="induction">
    <text evidence="5">Expression is down-regulated by dioctatin A (DotA), a metabolite of Streptomyces (PubMed:17660441).</text>
</comment>
<feature type="chain" id="PRO_0000435942" description="C2H2 type master regulator of conidiophore development brlA">
    <location>
        <begin position="1"/>
        <end position="421"/>
    </location>
</feature>
<feature type="zinc finger region" description="C2H2-type 1" evidence="3">
    <location>
        <begin position="309"/>
        <end position="333"/>
    </location>
</feature>
<feature type="zinc finger region" description="C2H2-type 2" evidence="3">
    <location>
        <begin position="339"/>
        <end position="364"/>
    </location>
</feature>
<feature type="region of interest" description="Disordered" evidence="4">
    <location>
        <begin position="228"/>
        <end position="247"/>
    </location>
</feature>
<feature type="region of interest" description="Disordered" evidence="4">
    <location>
        <begin position="361"/>
        <end position="421"/>
    </location>
</feature>
<feature type="compositionally biased region" description="Polar residues" evidence="4">
    <location>
        <begin position="228"/>
        <end position="242"/>
    </location>
</feature>
<feature type="compositionally biased region" description="Basic residues" evidence="4">
    <location>
        <begin position="361"/>
        <end position="370"/>
    </location>
</feature>
<organism>
    <name type="scientific">Aspergillus parasiticus (strain ATCC 56775 / NRRL 5862 / SRRC 143 / SU-1)</name>
    <dbReference type="NCBI Taxonomy" id="1403190"/>
    <lineage>
        <taxon>Eukaryota</taxon>
        <taxon>Fungi</taxon>
        <taxon>Dikarya</taxon>
        <taxon>Ascomycota</taxon>
        <taxon>Pezizomycotina</taxon>
        <taxon>Eurotiomycetes</taxon>
        <taxon>Eurotiomycetidae</taxon>
        <taxon>Eurotiales</taxon>
        <taxon>Aspergillaceae</taxon>
        <taxon>Aspergillus</taxon>
        <taxon>Aspergillus subgen. Circumdati</taxon>
    </lineage>
</organism>
<dbReference type="EMBL" id="AF533070">
    <property type="protein sequence ID" value="AAM95989.1"/>
    <property type="molecule type" value="Genomic_DNA"/>
</dbReference>
<dbReference type="EMBL" id="JZEE01000588">
    <property type="protein sequence ID" value="KJK62960.1"/>
    <property type="molecule type" value="Genomic_DNA"/>
</dbReference>
<dbReference type="SMR" id="A0A0F0I5G4"/>
<dbReference type="STRING" id="1403190.A0A0F0I5G4"/>
<dbReference type="OrthoDB" id="654211at2759"/>
<dbReference type="Proteomes" id="UP000033540">
    <property type="component" value="Unassembled WGS sequence"/>
</dbReference>
<dbReference type="GO" id="GO:0000785">
    <property type="term" value="C:chromatin"/>
    <property type="evidence" value="ECO:0007669"/>
    <property type="project" value="TreeGrafter"/>
</dbReference>
<dbReference type="GO" id="GO:0005634">
    <property type="term" value="C:nucleus"/>
    <property type="evidence" value="ECO:0007669"/>
    <property type="project" value="UniProtKB-SubCell"/>
</dbReference>
<dbReference type="GO" id="GO:0005667">
    <property type="term" value="C:transcription regulator complex"/>
    <property type="evidence" value="ECO:0007669"/>
    <property type="project" value="TreeGrafter"/>
</dbReference>
<dbReference type="GO" id="GO:0000981">
    <property type="term" value="F:DNA-binding transcription factor activity, RNA polymerase II-specific"/>
    <property type="evidence" value="ECO:0007669"/>
    <property type="project" value="TreeGrafter"/>
</dbReference>
<dbReference type="GO" id="GO:0000978">
    <property type="term" value="F:RNA polymerase II cis-regulatory region sequence-specific DNA binding"/>
    <property type="evidence" value="ECO:0007669"/>
    <property type="project" value="TreeGrafter"/>
</dbReference>
<dbReference type="GO" id="GO:0008270">
    <property type="term" value="F:zinc ion binding"/>
    <property type="evidence" value="ECO:0007669"/>
    <property type="project" value="UniProtKB-KW"/>
</dbReference>
<dbReference type="GO" id="GO:0048315">
    <property type="term" value="P:conidium formation"/>
    <property type="evidence" value="ECO:0007669"/>
    <property type="project" value="UniProtKB-KW"/>
</dbReference>
<dbReference type="GO" id="GO:0030435">
    <property type="term" value="P:sporulation resulting in formation of a cellular spore"/>
    <property type="evidence" value="ECO:0007669"/>
    <property type="project" value="UniProtKB-KW"/>
</dbReference>
<dbReference type="FunFam" id="3.30.160.60:FF:000845">
    <property type="entry name" value="C2H2 type conidiation transcription factor BrlA"/>
    <property type="match status" value="1"/>
</dbReference>
<dbReference type="Gene3D" id="3.30.160.60">
    <property type="entry name" value="Classic Zinc Finger"/>
    <property type="match status" value="2"/>
</dbReference>
<dbReference type="InterPro" id="IPR036236">
    <property type="entry name" value="Znf_C2H2_sf"/>
</dbReference>
<dbReference type="InterPro" id="IPR013087">
    <property type="entry name" value="Znf_C2H2_type"/>
</dbReference>
<dbReference type="PANTHER" id="PTHR14003">
    <property type="entry name" value="TRANSCRIPTIONAL REPRESSOR PROTEIN YY"/>
    <property type="match status" value="1"/>
</dbReference>
<dbReference type="PANTHER" id="PTHR14003:SF19">
    <property type="entry name" value="YY2 TRANSCRIPTION FACTOR"/>
    <property type="match status" value="1"/>
</dbReference>
<dbReference type="Pfam" id="PF00096">
    <property type="entry name" value="zf-C2H2"/>
    <property type="match status" value="2"/>
</dbReference>
<dbReference type="SMART" id="SM00355">
    <property type="entry name" value="ZnF_C2H2"/>
    <property type="match status" value="2"/>
</dbReference>
<dbReference type="SUPFAM" id="SSF57667">
    <property type="entry name" value="beta-beta-alpha zinc fingers"/>
    <property type="match status" value="1"/>
</dbReference>
<dbReference type="PROSITE" id="PS00028">
    <property type="entry name" value="ZINC_FINGER_C2H2_1"/>
    <property type="match status" value="2"/>
</dbReference>
<dbReference type="PROSITE" id="PS50157">
    <property type="entry name" value="ZINC_FINGER_C2H2_2"/>
    <property type="match status" value="2"/>
</dbReference>
<name>BRLA_ASPPU</name>
<keyword id="KW-0010">Activator</keyword>
<keyword id="KW-0183">Conidiation</keyword>
<keyword id="KW-0238">DNA-binding</keyword>
<keyword id="KW-0479">Metal-binding</keyword>
<keyword id="KW-0539">Nucleus</keyword>
<keyword id="KW-1185">Reference proteome</keyword>
<keyword id="KW-0677">Repeat</keyword>
<keyword id="KW-0749">Sporulation</keyword>
<keyword id="KW-0804">Transcription</keyword>
<keyword id="KW-0805">Transcription regulation</keyword>
<keyword id="KW-0862">Zinc</keyword>
<keyword id="KW-0863">Zinc-finger</keyword>
<gene>
    <name evidence="6" type="primary">brlA</name>
    <name evidence="8" type="ORF">P875_00034167</name>
</gene>
<sequence>MRAQNNLTVEVDCHSLGSNECPSMTSSFSPMDSPTPTPTSIYSQGSLASPGWQDAGSYPGHAYERHTGTTPMRSAFRLAGMTSNENMAMSYGAMEAQERMPMPDFLSAYDDNVEHFWLPSDAPKTYETGTHSLPYPHTLPQCPPMVRSNYRPHAAYLPEAATNPCLSRSIFHHAERVPQSMSMGNMMPWIPQASESIAPQTIAPSQVGPVTPPPSYSEFPTSIQTFKTHSPTTPLRSCSIGTASGPDTPISRMSGGAADYLEDFQQSPPFRDGLNRLQRHPSRKMIRKQSSRQNMSLENLPSIIKQVQFKCKEPGCKGRFKRQEHLKRHMKSHSKEKPHVCWVPGCERAFSRSDNLNAHYTKTHSKRGGRNRYVATLDESSPDYDPDFRGQLTPDGRPIRGSTLDDPMPDTREYSVDGLDD</sequence>
<proteinExistence type="evidence at transcript level"/>
<accession>A0A0F0I5G4</accession>
<accession>Q8NJN7</accession>